<feature type="transit peptide" description="Mitochondrion" evidence="4">
    <location>
        <begin position="1"/>
        <end position="13"/>
    </location>
</feature>
<feature type="chain" id="PRO_0000035993" description="Cytochrome b-c1 complex subunit 6, mitochondrial">
    <location>
        <begin position="14"/>
        <end position="89"/>
    </location>
</feature>
<feature type="region of interest" description="Disordered" evidence="5">
    <location>
        <begin position="1"/>
        <end position="27"/>
    </location>
</feature>
<feature type="modified residue" description="N6-acetyllysine" evidence="4">
    <location>
        <position position="40"/>
    </location>
</feature>
<feature type="modified residue" description="N6-acetyllysine" evidence="4">
    <location>
        <position position="83"/>
    </location>
</feature>
<feature type="disulfide bond" evidence="1">
    <location>
        <begin position="35"/>
        <end position="79"/>
    </location>
</feature>
<feature type="disulfide bond" evidence="1">
    <location>
        <begin position="51"/>
        <end position="65"/>
    </location>
</feature>
<evidence type="ECO:0000250" key="1">
    <source>
        <dbReference type="UniProtKB" id="P00126"/>
    </source>
</evidence>
<evidence type="ECO:0000250" key="2">
    <source>
        <dbReference type="UniProtKB" id="P00127"/>
    </source>
</evidence>
<evidence type="ECO:0000250" key="3">
    <source>
        <dbReference type="UniProtKB" id="P07919"/>
    </source>
</evidence>
<evidence type="ECO:0000250" key="4">
    <source>
        <dbReference type="UniProtKB" id="P99028"/>
    </source>
</evidence>
<evidence type="ECO:0000256" key="5">
    <source>
        <dbReference type="SAM" id="MobiDB-lite"/>
    </source>
</evidence>
<evidence type="ECO:0000305" key="6"/>
<organism>
    <name type="scientific">Rattus norvegicus</name>
    <name type="common">Rat</name>
    <dbReference type="NCBI Taxonomy" id="10116"/>
    <lineage>
        <taxon>Eukaryota</taxon>
        <taxon>Metazoa</taxon>
        <taxon>Chordata</taxon>
        <taxon>Craniata</taxon>
        <taxon>Vertebrata</taxon>
        <taxon>Euteleostomi</taxon>
        <taxon>Mammalia</taxon>
        <taxon>Eutheria</taxon>
        <taxon>Euarchontoglires</taxon>
        <taxon>Glires</taxon>
        <taxon>Rodentia</taxon>
        <taxon>Myomorpha</taxon>
        <taxon>Muroidea</taxon>
        <taxon>Muridae</taxon>
        <taxon>Murinae</taxon>
        <taxon>Rattus</taxon>
    </lineage>
</organism>
<keyword id="KW-0007">Acetylation</keyword>
<keyword id="KW-1015">Disulfide bond</keyword>
<keyword id="KW-0249">Electron transport</keyword>
<keyword id="KW-0472">Membrane</keyword>
<keyword id="KW-0496">Mitochondrion</keyword>
<keyword id="KW-0999">Mitochondrion inner membrane</keyword>
<keyword id="KW-1185">Reference proteome</keyword>
<keyword id="KW-0679">Respiratory chain</keyword>
<keyword id="KW-0809">Transit peptide</keyword>
<keyword id="KW-0813">Transport</keyword>
<sequence length="89" mass="10424">MGLEDERKMLTGSGDPKEEEEEELVDPLTTVREHCEQLEKCVKARERLESCDRRVSSRSQTEEDCTEELFDFLHARDHCVAHKLFKSLK</sequence>
<dbReference type="EMBL" id="BC086954">
    <property type="protein sequence ID" value="AAH86954.1"/>
    <property type="molecule type" value="mRNA"/>
</dbReference>
<dbReference type="RefSeq" id="NP_001009480.1">
    <property type="nucleotide sequence ID" value="NM_001009480.1"/>
</dbReference>
<dbReference type="SMR" id="Q5M9I5"/>
<dbReference type="BioGRID" id="265934">
    <property type="interactions" value="2"/>
</dbReference>
<dbReference type="CORUM" id="Q5M9I5"/>
<dbReference type="FunCoup" id="Q5M9I5">
    <property type="interactions" value="168"/>
</dbReference>
<dbReference type="STRING" id="10116.ENSRNOP00000016751"/>
<dbReference type="iPTMnet" id="Q5M9I5"/>
<dbReference type="PhosphoSitePlus" id="Q5M9I5"/>
<dbReference type="jPOST" id="Q5M9I5"/>
<dbReference type="PaxDb" id="10116-ENSRNOP00000016751"/>
<dbReference type="GeneID" id="366448"/>
<dbReference type="KEGG" id="rno:366448"/>
<dbReference type="UCSC" id="RGD:1305987">
    <property type="organism name" value="rat"/>
</dbReference>
<dbReference type="AGR" id="RGD:1305987"/>
<dbReference type="CTD" id="7388"/>
<dbReference type="RGD" id="1305987">
    <property type="gene designation" value="Uqcrh"/>
</dbReference>
<dbReference type="VEuPathDB" id="HostDB:ENSRNOG00000012550"/>
<dbReference type="eggNOG" id="KOG4763">
    <property type="taxonomic scope" value="Eukaryota"/>
</dbReference>
<dbReference type="HOGENOM" id="CLU_115913_3_0_1"/>
<dbReference type="InParanoid" id="Q5M9I5"/>
<dbReference type="OrthoDB" id="39874at9989"/>
<dbReference type="PhylomeDB" id="Q5M9I5"/>
<dbReference type="TreeFam" id="TF105036"/>
<dbReference type="Reactome" id="R-RNO-611105">
    <property type="pathway name" value="Respiratory electron transport"/>
</dbReference>
<dbReference type="Reactome" id="R-RNO-9865881">
    <property type="pathway name" value="Complex III assembly"/>
</dbReference>
<dbReference type="PRO" id="PR:Q5M9I5"/>
<dbReference type="Proteomes" id="UP000002494">
    <property type="component" value="Chromosome 5"/>
</dbReference>
<dbReference type="Bgee" id="ENSRNOG00000012550">
    <property type="expression patterns" value="Expressed in heart and 20 other cell types or tissues"/>
</dbReference>
<dbReference type="GO" id="GO:0005743">
    <property type="term" value="C:mitochondrial inner membrane"/>
    <property type="evidence" value="ECO:0000266"/>
    <property type="project" value="RGD"/>
</dbReference>
<dbReference type="GO" id="GO:0005739">
    <property type="term" value="C:mitochondrion"/>
    <property type="evidence" value="ECO:0000266"/>
    <property type="project" value="RGD"/>
</dbReference>
<dbReference type="GO" id="GO:0045275">
    <property type="term" value="C:respiratory chain complex III"/>
    <property type="evidence" value="ECO:0000314"/>
    <property type="project" value="RGD"/>
</dbReference>
<dbReference type="GO" id="GO:0044877">
    <property type="term" value="F:protein-containing complex binding"/>
    <property type="evidence" value="ECO:0000314"/>
    <property type="project" value="RGD"/>
</dbReference>
<dbReference type="GO" id="GO:0008121">
    <property type="term" value="F:ubiquinol-cytochrome-c reductase activity"/>
    <property type="evidence" value="ECO:0000250"/>
    <property type="project" value="UniProtKB"/>
</dbReference>
<dbReference type="GO" id="GO:0006122">
    <property type="term" value="P:mitochondrial electron transport, ubiquinol to cytochrome c"/>
    <property type="evidence" value="ECO:0000318"/>
    <property type="project" value="GO_Central"/>
</dbReference>
<dbReference type="FunFam" id="1.10.287.20:FF:000002">
    <property type="entry name" value="Cytochrome b-c1 complex subunit 6"/>
    <property type="match status" value="1"/>
</dbReference>
<dbReference type="Gene3D" id="1.10.287.20">
    <property type="entry name" value="Ubiquinol-cytochrome C reductase hinge domain"/>
    <property type="match status" value="1"/>
</dbReference>
<dbReference type="InterPro" id="IPR003422">
    <property type="entry name" value="Cyt_b-c1_6"/>
</dbReference>
<dbReference type="InterPro" id="IPR023184">
    <property type="entry name" value="Ubol_cytC_Rdtase_hinge_dom"/>
</dbReference>
<dbReference type="InterPro" id="IPR036811">
    <property type="entry name" value="Ubol_cytC_Rdtase_hinge_dom_sf"/>
</dbReference>
<dbReference type="PANTHER" id="PTHR15336:SF0">
    <property type="entry name" value="CYTOCHROME B-C1 COMPLEX SUBUNIT 6, MITOCHONDRIAL"/>
    <property type="match status" value="1"/>
</dbReference>
<dbReference type="PANTHER" id="PTHR15336">
    <property type="entry name" value="UBIQUINOL-CYTOCHROME C REDUCTASE COMPLEX 7.8 KDA PROTEIN"/>
    <property type="match status" value="1"/>
</dbReference>
<dbReference type="Pfam" id="PF02320">
    <property type="entry name" value="UCR_hinge"/>
    <property type="match status" value="1"/>
</dbReference>
<dbReference type="PIRSF" id="PIRSF000019">
    <property type="entry name" value="Bc1_11K"/>
    <property type="match status" value="1"/>
</dbReference>
<dbReference type="SUPFAM" id="SSF81531">
    <property type="entry name" value="Non-heme 11 kDa protein of cytochrome bc1 complex (Ubiquinol-cytochrome c reductase)"/>
    <property type="match status" value="1"/>
</dbReference>
<name>QCR6_RAT</name>
<gene>
    <name type="primary">Uqcrh</name>
</gene>
<protein>
    <recommendedName>
        <fullName>Cytochrome b-c1 complex subunit 6, mitochondrial</fullName>
    </recommendedName>
    <alternativeName>
        <fullName>Complex III subunit 6</fullName>
    </alternativeName>
    <alternativeName>
        <fullName>Complex III subunit VIII</fullName>
    </alternativeName>
    <alternativeName>
        <fullName>Cytochrome c1 non-heme 11 kDa protein</fullName>
    </alternativeName>
    <alternativeName>
        <fullName>Mitochondrial hinge protein</fullName>
    </alternativeName>
    <alternativeName>
        <fullName>Ubiquinol-cytochrome c reductase complex 11 kDa protein</fullName>
    </alternativeName>
</protein>
<accession>Q5M9I5</accession>
<comment type="function">
    <text evidence="2 3">Component of the ubiquinol-cytochrome c oxidoreductase, a multisubunit transmembrane complex that is part of the mitochondrial electron transport chain which drives oxidative phosphorylation. The respiratory chain contains 3 multisubunit complexes succinate dehydrogenase (complex II, CII), ubiquinol-cytochrome c oxidoreductase (cytochrome b-c1 complex, complex III, CIII) and cytochrome c oxidase (complex IV, CIV), that cooperate to transfer electrons derived from NADH and succinate to molecular oxygen, creating an electrochemical gradient over the inner membrane that drives transmembrane transport and the ATP synthase. The cytochrome b-c1 complex catalyzes electron transfer from ubiquinol to cytochrome c, linking this redox reaction to translocation of protons across the mitochondrial inner membrane, with protons being carried across the membrane as hydrogens on the quinol. In the process called Q cycle, 2 protons are consumed from the matrix, 4 protons are released into the intermembrane space and 2 electrons are passed to cytochrome c.</text>
</comment>
<comment type="subunit">
    <text evidence="1 3">Component of the ubiquinol-cytochrome c oxidoreductase (cytochrome b-c1 complex, complex III, CIII), a multisubunit enzyme composed of 11 subunits. The complex is composed of 3 respiratory subunits cytochrome b, cytochrome c1 and Rieske protein UQCRFS1, 2 core protein subunits UQCRC1/QCR1 and UQCRC2/QCR2, and 6 low-molecular weight protein subunits UQCRH/QCR6, UQCRB/QCR7, UQCRQ/QCR8, UQCR10/QCR9, UQCR11/QCR10 and subunit 9, the cleavage product of Rieske protein UQCRFS1 (By similarity). The complex exists as an obligatory dimer and forms supercomplexes (SCs) in the inner mitochondrial membrane with NADH-ubiquinone oxidoreductase (complex I, CI) and cytochrome c oxidase (complex IV, CIV), resulting in different assemblies (supercomplex SCI(1)III(2)IV(1) and megacomplex MCI(2)III(2)IV(2)) (By similarity).</text>
</comment>
<comment type="subcellular location">
    <subcellularLocation>
        <location evidence="2">Mitochondrion inner membrane</location>
        <topology evidence="2">Peripheral membrane protein</topology>
        <orientation evidence="2">Intermembrane side</orientation>
    </subcellularLocation>
</comment>
<comment type="similarity">
    <text evidence="6">Belongs to the UQCRH/QCR6 family.</text>
</comment>
<reference key="1">
    <citation type="journal article" date="2004" name="Genome Res.">
        <title>The status, quality, and expansion of the NIH full-length cDNA project: the Mammalian Gene Collection (MGC).</title>
        <authorList>
            <consortium name="The MGC Project Team"/>
        </authorList>
    </citation>
    <scope>NUCLEOTIDE SEQUENCE [LARGE SCALE MRNA]</scope>
    <source>
        <tissue>Spleen</tissue>
    </source>
</reference>
<proteinExistence type="inferred from homology"/>